<reference key="1">
    <citation type="journal article" date="2008" name="PLoS Genet.">
        <title>Genomic islands in the pathogenic filamentous fungus Aspergillus fumigatus.</title>
        <authorList>
            <person name="Fedorova N.D."/>
            <person name="Khaldi N."/>
            <person name="Joardar V.S."/>
            <person name="Maiti R."/>
            <person name="Amedeo P."/>
            <person name="Anderson M.J."/>
            <person name="Crabtree J."/>
            <person name="Silva J.C."/>
            <person name="Badger J.H."/>
            <person name="Albarraq A."/>
            <person name="Angiuoli S."/>
            <person name="Bussey H."/>
            <person name="Bowyer P."/>
            <person name="Cotty P.J."/>
            <person name="Dyer P.S."/>
            <person name="Egan A."/>
            <person name="Galens K."/>
            <person name="Fraser-Liggett C.M."/>
            <person name="Haas B.J."/>
            <person name="Inman J.M."/>
            <person name="Kent R."/>
            <person name="Lemieux S."/>
            <person name="Malavazi I."/>
            <person name="Orvis J."/>
            <person name="Roemer T."/>
            <person name="Ronning C.M."/>
            <person name="Sundaram J.P."/>
            <person name="Sutton G."/>
            <person name="Turner G."/>
            <person name="Venter J.C."/>
            <person name="White O.R."/>
            <person name="Whitty B.R."/>
            <person name="Youngman P."/>
            <person name="Wolfe K.H."/>
            <person name="Goldman G.H."/>
            <person name="Wortman J.R."/>
            <person name="Jiang B."/>
            <person name="Denning D.W."/>
            <person name="Nierman W.C."/>
        </authorList>
    </citation>
    <scope>NUCLEOTIDE SEQUENCE [LARGE SCALE GENOMIC DNA]</scope>
    <source>
        <strain>ATCC 1020 / DSM 3700 / CBS 544.65 / FGSC A1164 / JCM 1740 / NRRL 181 / WB 181</strain>
    </source>
</reference>
<sequence>MAEAGQPRPLTAFAPPPPLWKHFTPDNLKRLEEVKKEASKGEDGKPRKKKWTPAELRALQLPPELRFLVPPEIPMSGQYSVFGELQSLSTTLPSLQEQGIEQLYPSTPTETDPNKPSQPSRPFNHAYYLLKISKSLLLNFLEFVGILSITPEQFQSKVEDLRNLFINAHHLLNLYRPHQARESLIMMMEEQLNRSREEIQQMDKMHAEINGFLEQLKAQGIDVDSASKSGENDTAKRTTGDQDANNANSSRLVWDILDGTD</sequence>
<comment type="function">
    <text evidence="1">Component of the Mediator complex, a coactivator involved in the regulated transcription of nearly all RNA polymerase II-dependent genes. Mediator functions as a bridge to convey information from gene-specific regulatory proteins to the basal RNA polymerase II transcription machinery. Mediator is recruited to promoters by direct interactions with regulatory proteins and serves as a scaffold for the assembly of a functional preinitiation complex with RNA polymerase II and the general transcription factors (By similarity).</text>
</comment>
<comment type="subunit">
    <text evidence="1">Component of the Mediator complex.</text>
</comment>
<comment type="subcellular location">
    <subcellularLocation>
        <location evidence="1">Nucleus</location>
    </subcellularLocation>
</comment>
<comment type="similarity">
    <text evidence="3">Belongs to the Mediator complex subunit 7 family.</text>
</comment>
<organism>
    <name type="scientific">Neosartorya fischeri (strain ATCC 1020 / DSM 3700 / CBS 544.65 / FGSC A1164 / JCM 1740 / NRRL 181 / WB 181)</name>
    <name type="common">Aspergillus fischerianus</name>
    <dbReference type="NCBI Taxonomy" id="331117"/>
    <lineage>
        <taxon>Eukaryota</taxon>
        <taxon>Fungi</taxon>
        <taxon>Dikarya</taxon>
        <taxon>Ascomycota</taxon>
        <taxon>Pezizomycotina</taxon>
        <taxon>Eurotiomycetes</taxon>
        <taxon>Eurotiomycetidae</taxon>
        <taxon>Eurotiales</taxon>
        <taxon>Aspergillaceae</taxon>
        <taxon>Aspergillus</taxon>
        <taxon>Aspergillus subgen. Fumigati</taxon>
    </lineage>
</organism>
<keyword id="KW-0010">Activator</keyword>
<keyword id="KW-0539">Nucleus</keyword>
<keyword id="KW-1185">Reference proteome</keyword>
<keyword id="KW-0804">Transcription</keyword>
<keyword id="KW-0805">Transcription regulation</keyword>
<evidence type="ECO:0000250" key="1"/>
<evidence type="ECO:0000256" key="2">
    <source>
        <dbReference type="SAM" id="MobiDB-lite"/>
    </source>
</evidence>
<evidence type="ECO:0000305" key="3"/>
<protein>
    <recommendedName>
        <fullName>Mediator of RNA polymerase II transcription subunit 7</fullName>
    </recommendedName>
    <alternativeName>
        <fullName>Mediator complex subunit 7</fullName>
    </alternativeName>
</protein>
<dbReference type="EMBL" id="DS027698">
    <property type="protein sequence ID" value="EAW16230.1"/>
    <property type="molecule type" value="Genomic_DNA"/>
</dbReference>
<dbReference type="RefSeq" id="XP_001258127.1">
    <property type="nucleotide sequence ID" value="XM_001258126.1"/>
</dbReference>
<dbReference type="SMR" id="A1DN59"/>
<dbReference type="STRING" id="331117.A1DN59"/>
<dbReference type="EnsemblFungi" id="EAW16230">
    <property type="protein sequence ID" value="EAW16230"/>
    <property type="gene ID" value="NFIA_055790"/>
</dbReference>
<dbReference type="GeneID" id="4584642"/>
<dbReference type="KEGG" id="nfi:NFIA_055790"/>
<dbReference type="VEuPathDB" id="FungiDB:NFIA_055790"/>
<dbReference type="eggNOG" id="KOG0570">
    <property type="taxonomic scope" value="Eukaryota"/>
</dbReference>
<dbReference type="HOGENOM" id="CLU_065214_0_1_1"/>
<dbReference type="OMA" id="IHDSYSM"/>
<dbReference type="OrthoDB" id="10253553at2759"/>
<dbReference type="Proteomes" id="UP000006702">
    <property type="component" value="Unassembled WGS sequence"/>
</dbReference>
<dbReference type="GO" id="GO:0070847">
    <property type="term" value="C:core mediator complex"/>
    <property type="evidence" value="ECO:0007669"/>
    <property type="project" value="TreeGrafter"/>
</dbReference>
<dbReference type="GO" id="GO:0016592">
    <property type="term" value="C:mediator complex"/>
    <property type="evidence" value="ECO:0007669"/>
    <property type="project" value="InterPro"/>
</dbReference>
<dbReference type="GO" id="GO:0003712">
    <property type="term" value="F:transcription coregulator activity"/>
    <property type="evidence" value="ECO:0007669"/>
    <property type="project" value="InterPro"/>
</dbReference>
<dbReference type="GO" id="GO:0006357">
    <property type="term" value="P:regulation of transcription by RNA polymerase II"/>
    <property type="evidence" value="ECO:0007669"/>
    <property type="project" value="InterPro"/>
</dbReference>
<dbReference type="Gene3D" id="6.10.140.1520">
    <property type="match status" value="1"/>
</dbReference>
<dbReference type="Gene3D" id="6.10.140.200">
    <property type="match status" value="1"/>
</dbReference>
<dbReference type="InterPro" id="IPR037212">
    <property type="entry name" value="Med7/Med21-like"/>
</dbReference>
<dbReference type="InterPro" id="IPR009244">
    <property type="entry name" value="Mediatior_Med7"/>
</dbReference>
<dbReference type="InterPro" id="IPR044888">
    <property type="entry name" value="Mediatior_Med7_sf"/>
</dbReference>
<dbReference type="PANTHER" id="PTHR21428">
    <property type="entry name" value="MEDIATOR OF RNA POLYMERASE II TRANSCRIPTION SUBUNIT 7"/>
    <property type="match status" value="1"/>
</dbReference>
<dbReference type="PANTHER" id="PTHR21428:SF11">
    <property type="entry name" value="MEDIATOR OF RNA POLYMERASE II TRANSCRIPTION SUBUNIT 7"/>
    <property type="match status" value="1"/>
</dbReference>
<dbReference type="Pfam" id="PF05983">
    <property type="entry name" value="Med7"/>
    <property type="match status" value="1"/>
</dbReference>
<dbReference type="SUPFAM" id="SSF140718">
    <property type="entry name" value="Mediator hinge subcomplex-like"/>
    <property type="match status" value="1"/>
</dbReference>
<gene>
    <name type="primary">med7</name>
    <name type="ORF">NFIA_055790</name>
</gene>
<name>MED7_NEOFI</name>
<accession>A1DN59</accession>
<feature type="chain" id="PRO_0000303204" description="Mediator of RNA polymerase II transcription subunit 7">
    <location>
        <begin position="1"/>
        <end position="261"/>
    </location>
</feature>
<feature type="region of interest" description="Disordered" evidence="2">
    <location>
        <begin position="1"/>
        <end position="55"/>
    </location>
</feature>
<feature type="region of interest" description="Disordered" evidence="2">
    <location>
        <begin position="224"/>
        <end position="250"/>
    </location>
</feature>
<feature type="compositionally biased region" description="Basic and acidic residues" evidence="2">
    <location>
        <begin position="23"/>
        <end position="45"/>
    </location>
</feature>
<feature type="compositionally biased region" description="Basic and acidic residues" evidence="2">
    <location>
        <begin position="230"/>
        <end position="240"/>
    </location>
</feature>
<feature type="compositionally biased region" description="Polar residues" evidence="2">
    <location>
        <begin position="241"/>
        <end position="250"/>
    </location>
</feature>
<proteinExistence type="inferred from homology"/>